<organism>
    <name type="scientific">Pyrobaculum aerophilum (strain ATCC 51768 / DSM 7523 / JCM 9630 / CIP 104966 / NBRC 100827 / IM2)</name>
    <dbReference type="NCBI Taxonomy" id="178306"/>
    <lineage>
        <taxon>Archaea</taxon>
        <taxon>Thermoproteota</taxon>
        <taxon>Thermoprotei</taxon>
        <taxon>Thermoproteales</taxon>
        <taxon>Thermoproteaceae</taxon>
        <taxon>Pyrobaculum</taxon>
    </lineage>
</organism>
<reference key="1">
    <citation type="journal article" date="2002" name="Proc. Natl. Acad. Sci. U.S.A.">
        <title>Genome sequence of the hyperthermophilic crenarchaeon Pyrobaculum aerophilum.</title>
        <authorList>
            <person name="Fitz-Gibbon S.T."/>
            <person name="Ladner H."/>
            <person name="Kim U.-J."/>
            <person name="Stetter K.O."/>
            <person name="Simon M.I."/>
            <person name="Miller J.H."/>
        </authorList>
    </citation>
    <scope>NUCLEOTIDE SEQUENCE [LARGE SCALE GENOMIC DNA]</scope>
    <source>
        <strain>ATCC 51768 / DSM 7523 / JCM 9630 / CIP 104966 / NBRC 100827 / IM2</strain>
    </source>
</reference>
<comment type="function">
    <text evidence="1">Probable RNase involved in rRNA stability through maturation and/or degradation of precursor rRNAs. Binds to RNA in loop regions with AU-rich sequences.</text>
</comment>
<comment type="similarity">
    <text evidence="1">Belongs to the FAU-1 family.</text>
</comment>
<accession>Q8ZZX6</accession>
<feature type="chain" id="PRO_0000334202" description="Probable ribonuclease FAU-1">
    <location>
        <begin position="1"/>
        <end position="443"/>
    </location>
</feature>
<proteinExistence type="inferred from homology"/>
<evidence type="ECO:0000255" key="1">
    <source>
        <dbReference type="HAMAP-Rule" id="MF_01910"/>
    </source>
</evidence>
<keyword id="KW-0255">Endonuclease</keyword>
<keyword id="KW-0378">Hydrolase</keyword>
<keyword id="KW-0540">Nuclease</keyword>
<keyword id="KW-1185">Reference proteome</keyword>
<keyword id="KW-0694">RNA-binding</keyword>
<keyword id="KW-0698">rRNA processing</keyword>
<gene>
    <name evidence="1" type="primary">fau-1</name>
    <name type="ordered locus">PAE0030</name>
</gene>
<name>FAU1_PYRAE</name>
<protein>
    <recommendedName>
        <fullName evidence="1">Probable ribonuclease FAU-1</fullName>
        <ecNumber evidence="1">3.1.26.-</ecNumber>
    </recommendedName>
    <alternativeName>
        <fullName evidence="1">RNA-binding protein FAU-1</fullName>
    </alternativeName>
</protein>
<sequence length="443" mass="48852">MYKVRIRGIFATALTKLALEWGFKIVQPTGKILQRFQIEADYSPPDLTVKDHESKTGVVVLGKCEAFESFLQRLGESLDPIVARARAGVKEVFSGKAVGEHEVEGPRGEVFKVPARYVLTPGGTGVFTVVKPPVGPVSGVAAPEIAVEGDYVELNTSGRVTFSEHIPQEDRLRLGILAETRLKQYASIGLRFKSSAKYADEEQIIKEAEVLYRELLQLSHGGPPGAVLRRGNCFAVVLFDRRSKEVLDSARASAVPTVRGHHALRAQGLGKCLDLLDYTGADVYEKAVEFLSRGPVLIYHVKPWGEVVKMKGEALGVKNGVLVVKRPLKPGGVLDGIGVRIERGFYALTCIPRDANYVVHTYYDGSNNVVGTYININTTPEWGRRVIYIDLLVDKTYAGGVEKVLDVDEFEKYKEYFPQRLRNPLQLAPSGRLECTAEGLVVR</sequence>
<dbReference type="EC" id="3.1.26.-" evidence="1"/>
<dbReference type="EMBL" id="AE009441">
    <property type="protein sequence ID" value="AAL62513.1"/>
    <property type="molecule type" value="Genomic_DNA"/>
</dbReference>
<dbReference type="RefSeq" id="WP_011006985.1">
    <property type="nucleotide sequence ID" value="NC_003364.1"/>
</dbReference>
<dbReference type="SMR" id="Q8ZZX6"/>
<dbReference type="STRING" id="178306.PAE0030"/>
<dbReference type="EnsemblBacteria" id="AAL62513">
    <property type="protein sequence ID" value="AAL62513"/>
    <property type="gene ID" value="PAE0030"/>
</dbReference>
<dbReference type="GeneID" id="1464727"/>
<dbReference type="KEGG" id="pai:PAE0030"/>
<dbReference type="PATRIC" id="fig|178306.9.peg.21"/>
<dbReference type="eggNOG" id="arCOG04307">
    <property type="taxonomic scope" value="Archaea"/>
</dbReference>
<dbReference type="HOGENOM" id="CLU_044303_0_0_2"/>
<dbReference type="InParanoid" id="Q8ZZX6"/>
<dbReference type="Proteomes" id="UP000002439">
    <property type="component" value="Chromosome"/>
</dbReference>
<dbReference type="GO" id="GO:0035925">
    <property type="term" value="F:mRNA 3'-UTR AU-rich region binding"/>
    <property type="evidence" value="ECO:0007669"/>
    <property type="project" value="UniProtKB-UniRule"/>
</dbReference>
<dbReference type="GO" id="GO:0016891">
    <property type="term" value="F:RNA endonuclease activity, producing 5'-phosphomonoesters"/>
    <property type="evidence" value="ECO:0007669"/>
    <property type="project" value="UniProtKB-UniRule"/>
</dbReference>
<dbReference type="GO" id="GO:0006364">
    <property type="term" value="P:rRNA processing"/>
    <property type="evidence" value="ECO:0007669"/>
    <property type="project" value="UniProtKB-UniRule"/>
</dbReference>
<dbReference type="Gene3D" id="2.40.380.10">
    <property type="entry name" value="FomD-like"/>
    <property type="match status" value="1"/>
</dbReference>
<dbReference type="HAMAP" id="MF_01910">
    <property type="entry name" value="RNA_binding_AU_1"/>
    <property type="match status" value="1"/>
</dbReference>
<dbReference type="InterPro" id="IPR007295">
    <property type="entry name" value="DUF402"/>
</dbReference>
<dbReference type="InterPro" id="IPR035930">
    <property type="entry name" value="FomD-like_sf"/>
</dbReference>
<dbReference type="InterPro" id="IPR050212">
    <property type="entry name" value="Ntdp-like"/>
</dbReference>
<dbReference type="InterPro" id="IPR016730">
    <property type="entry name" value="RNA-bd_FAU-1"/>
</dbReference>
<dbReference type="PANTHER" id="PTHR39159">
    <property type="match status" value="1"/>
</dbReference>
<dbReference type="PANTHER" id="PTHR39159:SF1">
    <property type="entry name" value="UPF0374 PROTEIN YGAC"/>
    <property type="match status" value="1"/>
</dbReference>
<dbReference type="Pfam" id="PF04167">
    <property type="entry name" value="DUF402"/>
    <property type="match status" value="1"/>
</dbReference>
<dbReference type="PIRSF" id="PIRSF018644">
    <property type="entry name" value="RNA-binding_FAU-1"/>
    <property type="match status" value="1"/>
</dbReference>
<dbReference type="SUPFAM" id="SSF159234">
    <property type="entry name" value="FomD-like"/>
    <property type="match status" value="1"/>
</dbReference>